<organism>
    <name type="scientific">Schizosaccharomyces pombe (strain 972 / ATCC 24843)</name>
    <name type="common">Fission yeast</name>
    <dbReference type="NCBI Taxonomy" id="284812"/>
    <lineage>
        <taxon>Eukaryota</taxon>
        <taxon>Fungi</taxon>
        <taxon>Dikarya</taxon>
        <taxon>Ascomycota</taxon>
        <taxon>Taphrinomycotina</taxon>
        <taxon>Schizosaccharomycetes</taxon>
        <taxon>Schizosaccharomycetales</taxon>
        <taxon>Schizosaccharomycetaceae</taxon>
        <taxon>Schizosaccharomyces</taxon>
    </lineage>
</organism>
<feature type="chain" id="PRO_0000349133" description="Structure-specific endonuclease subunit slx1">
    <location>
        <begin position="1"/>
        <end position="271"/>
    </location>
</feature>
<feature type="domain" description="GIY-YIG" evidence="1">
    <location>
        <begin position="5"/>
        <end position="87"/>
    </location>
</feature>
<feature type="zinc finger region" description="SLX1-type" evidence="1">
    <location>
        <begin position="180"/>
        <end position="231"/>
    </location>
</feature>
<feature type="mutagenesis site" description="No endonuclease activity. Increases stalled replication forks in the replication fork barrier (RFB) of the rDNA and the amassing of X structures in rqh1 deletion mutant." evidence="2 4">
    <original>R</original>
    <variation>A</variation>
    <location>
        <position position="34"/>
    </location>
</feature>
<feature type="mutagenesis site" description="No endonuclease activity." evidence="2">
    <original>E</original>
    <variation>A</variation>
    <location>
        <position position="74"/>
    </location>
</feature>
<feature type="turn" evidence="10">
    <location>
        <begin position="181"/>
        <end position="183"/>
    </location>
</feature>
<feature type="turn" evidence="10">
    <location>
        <begin position="199"/>
        <end position="201"/>
    </location>
</feature>
<feature type="helix" evidence="10">
    <location>
        <begin position="207"/>
        <end position="214"/>
    </location>
</feature>
<feature type="strand" evidence="10">
    <location>
        <begin position="224"/>
        <end position="227"/>
    </location>
</feature>
<feature type="turn" evidence="10">
    <location>
        <begin position="229"/>
        <end position="231"/>
    </location>
</feature>
<feature type="strand" evidence="10">
    <location>
        <begin position="234"/>
        <end position="236"/>
    </location>
</feature>
<feature type="helix" evidence="10">
    <location>
        <begin position="237"/>
        <end position="240"/>
    </location>
</feature>
<feature type="turn" evidence="10">
    <location>
        <begin position="242"/>
        <end position="244"/>
    </location>
</feature>
<dbReference type="EC" id="3.1.-.-" evidence="1"/>
<dbReference type="EMBL" id="CU329670">
    <property type="protein sequence ID" value="CAB76036.1"/>
    <property type="molecule type" value="Genomic_DNA"/>
</dbReference>
<dbReference type="RefSeq" id="NP_593420.1">
    <property type="nucleotide sequence ID" value="NM_001018853.2"/>
</dbReference>
<dbReference type="PDB" id="4ZDT">
    <property type="method" value="X-ray"/>
    <property type="resolution" value="2.00 A"/>
    <property type="chains" value="A/C=176-247"/>
</dbReference>
<dbReference type="PDBsum" id="4ZDT"/>
<dbReference type="SMR" id="Q9P7M3"/>
<dbReference type="BioGRID" id="278153">
    <property type="interactions" value="21"/>
</dbReference>
<dbReference type="FunCoup" id="Q9P7M3">
    <property type="interactions" value="101"/>
</dbReference>
<dbReference type="STRING" id="284812.Q9P7M3"/>
<dbReference type="PaxDb" id="4896-SPAP27G11.15.1"/>
<dbReference type="EnsemblFungi" id="SPAP27G11.15.1">
    <property type="protein sequence ID" value="SPAP27G11.15.1:pep"/>
    <property type="gene ID" value="SPAP27G11.15"/>
</dbReference>
<dbReference type="GeneID" id="2541657"/>
<dbReference type="KEGG" id="spo:2541657"/>
<dbReference type="PomBase" id="SPAP27G11.15">
    <property type="gene designation" value="slx1"/>
</dbReference>
<dbReference type="VEuPathDB" id="FungiDB:SPAP27G11.15"/>
<dbReference type="eggNOG" id="KOG3005">
    <property type="taxonomic scope" value="Eukaryota"/>
</dbReference>
<dbReference type="HOGENOM" id="CLU_030739_1_1_1"/>
<dbReference type="InParanoid" id="Q9P7M3"/>
<dbReference type="OMA" id="HNRGCDF"/>
<dbReference type="PhylomeDB" id="Q9P7M3"/>
<dbReference type="EvolutionaryTrace" id="Q9P7M3"/>
<dbReference type="PRO" id="PR:Q9P7M3"/>
<dbReference type="Proteomes" id="UP000002485">
    <property type="component" value="Chromosome I"/>
</dbReference>
<dbReference type="GO" id="GO:0030875">
    <property type="term" value="C:rDNA protrusion"/>
    <property type="evidence" value="ECO:0000314"/>
    <property type="project" value="PomBase"/>
</dbReference>
<dbReference type="GO" id="GO:0033557">
    <property type="term" value="C:Slx1-Slx4 complex"/>
    <property type="evidence" value="ECO:0000314"/>
    <property type="project" value="PomBase"/>
</dbReference>
<dbReference type="GO" id="GO:0017108">
    <property type="term" value="F:5'-flap endonuclease activity"/>
    <property type="evidence" value="ECO:0000266"/>
    <property type="project" value="PomBase"/>
</dbReference>
<dbReference type="GO" id="GO:0008821">
    <property type="term" value="F:crossover junction DNA endonuclease activity"/>
    <property type="evidence" value="ECO:0000314"/>
    <property type="project" value="PomBase"/>
</dbReference>
<dbReference type="GO" id="GO:1990238">
    <property type="term" value="F:double-stranded DNA endonuclease activity"/>
    <property type="evidence" value="ECO:0000314"/>
    <property type="project" value="PomBase"/>
</dbReference>
<dbReference type="GO" id="GO:0106332">
    <property type="term" value="F:ds/ssDNA junction-specific dsDNA endonuclease activity"/>
    <property type="evidence" value="ECO:0000314"/>
    <property type="project" value="PomBase"/>
</dbReference>
<dbReference type="GO" id="GO:0008270">
    <property type="term" value="F:zinc ion binding"/>
    <property type="evidence" value="ECO:0007669"/>
    <property type="project" value="UniProtKB-KW"/>
</dbReference>
<dbReference type="GO" id="GO:0000724">
    <property type="term" value="P:double-strand break repair via homologous recombination"/>
    <property type="evidence" value="ECO:0000316"/>
    <property type="project" value="PomBase"/>
</dbReference>
<dbReference type="GO" id="GO:0043007">
    <property type="term" value="P:maintenance of rDNA"/>
    <property type="evidence" value="ECO:0000315"/>
    <property type="project" value="PomBase"/>
</dbReference>
<dbReference type="GO" id="GO:0031297">
    <property type="term" value="P:replication fork processing"/>
    <property type="evidence" value="ECO:0000304"/>
    <property type="project" value="PomBase"/>
</dbReference>
<dbReference type="CDD" id="cd10455">
    <property type="entry name" value="GIY-YIG_SLX1"/>
    <property type="match status" value="1"/>
</dbReference>
<dbReference type="FunFam" id="3.40.1440.10:FF:000012">
    <property type="entry name" value="Structure-specific endonuclease subunit SLX1 homolog"/>
    <property type="match status" value="1"/>
</dbReference>
<dbReference type="Gene3D" id="3.40.1440.10">
    <property type="entry name" value="GIY-YIG endonuclease"/>
    <property type="match status" value="1"/>
</dbReference>
<dbReference type="Gene3D" id="3.30.40.10">
    <property type="entry name" value="Zinc/RING finger domain, C3HC4 (zinc finger)"/>
    <property type="match status" value="1"/>
</dbReference>
<dbReference type="HAMAP" id="MF_03100">
    <property type="entry name" value="Endonuc_su_Slx1"/>
    <property type="match status" value="1"/>
</dbReference>
<dbReference type="InterPro" id="IPR000305">
    <property type="entry name" value="GIY-YIG_endonuc"/>
</dbReference>
<dbReference type="InterPro" id="IPR035901">
    <property type="entry name" value="GIY-YIG_endonuc_sf"/>
</dbReference>
<dbReference type="InterPro" id="IPR027520">
    <property type="entry name" value="Slx1"/>
</dbReference>
<dbReference type="InterPro" id="IPR048749">
    <property type="entry name" value="SLX1_C"/>
</dbReference>
<dbReference type="InterPro" id="IPR050381">
    <property type="entry name" value="SLX1_endonuclease"/>
</dbReference>
<dbReference type="InterPro" id="IPR013083">
    <property type="entry name" value="Znf_RING/FYVE/PHD"/>
</dbReference>
<dbReference type="PANTHER" id="PTHR20208">
    <property type="entry name" value="STRUCTURE-SPECIFIC ENDONUCLEASE SUBUNIT SLX1"/>
    <property type="match status" value="1"/>
</dbReference>
<dbReference type="PANTHER" id="PTHR20208:SF13">
    <property type="entry name" value="STRUCTURE-SPECIFIC ENDONUCLEASE SUBUNIT SLX1"/>
    <property type="match status" value="1"/>
</dbReference>
<dbReference type="Pfam" id="PF01541">
    <property type="entry name" value="GIY-YIG"/>
    <property type="match status" value="1"/>
</dbReference>
<dbReference type="Pfam" id="PF21202">
    <property type="entry name" value="SLX1_C"/>
    <property type="match status" value="1"/>
</dbReference>
<dbReference type="SUPFAM" id="SSF82771">
    <property type="entry name" value="GIY-YIG endonuclease"/>
    <property type="match status" value="1"/>
</dbReference>
<dbReference type="PROSITE" id="PS50164">
    <property type="entry name" value="GIY_YIG"/>
    <property type="match status" value="1"/>
</dbReference>
<evidence type="ECO:0000255" key="1">
    <source>
        <dbReference type="HAMAP-Rule" id="MF_03100"/>
    </source>
</evidence>
<evidence type="ECO:0000269" key="2">
    <source>
    </source>
</evidence>
<evidence type="ECO:0000269" key="3">
    <source>
    </source>
</evidence>
<evidence type="ECO:0000269" key="4">
    <source>
    </source>
</evidence>
<evidence type="ECO:0000269" key="5">
    <source>
    </source>
</evidence>
<evidence type="ECO:0000269" key="6">
    <source>
    </source>
</evidence>
<evidence type="ECO:0000303" key="7">
    <source>
    </source>
</evidence>
<evidence type="ECO:0000305" key="8"/>
<evidence type="ECO:0000312" key="9">
    <source>
        <dbReference type="EMBL" id="CAB76036.1"/>
    </source>
</evidence>
<evidence type="ECO:0007829" key="10">
    <source>
        <dbReference type="PDB" id="4ZDT"/>
    </source>
</evidence>
<sequence>MDLCNFYCCYLLKSNRTQSSGAVYIGSTPDPPRRLRQHNGEIVGGASKTKHGRPWSISCLVYGFPNKVSALKFEWNWQNLGISRYTKDCDFRSKKQKTIMYCLKGLKHLVDSDTWRRWPLNITFLNKTAFSKWNQLGKTYGNINVYFDEEWLNGFHEKVIQKTYDHKLCLRKTISEPVKCNLCYECIESDELRANCPFTDCNSINHLTCLASSFLTEECQVLPIEGMCTKCKRVLRWREFLSTVFTTSLETDERDFESENRIEIIDLELEK</sequence>
<gene>
    <name evidence="9" type="primary">slx1</name>
    <name type="ORF">SPAP27G11.15</name>
</gene>
<accession>Q9P7M3</accession>
<protein>
    <recommendedName>
        <fullName evidence="1 7 9">Structure-specific endonuclease subunit slx1</fullName>
        <ecNumber evidence="1">3.1.-.-</ecNumber>
    </recommendedName>
</protein>
<name>SLX1_SCHPO</name>
<keyword id="KW-0002">3D-structure</keyword>
<keyword id="KW-0227">DNA damage</keyword>
<keyword id="KW-0233">DNA recombination</keyword>
<keyword id="KW-0234">DNA repair</keyword>
<keyword id="KW-0255">Endonuclease</keyword>
<keyword id="KW-0378">Hydrolase</keyword>
<keyword id="KW-0479">Metal-binding</keyword>
<keyword id="KW-0540">Nuclease</keyword>
<keyword id="KW-0539">Nucleus</keyword>
<keyword id="KW-1185">Reference proteome</keyword>
<keyword id="KW-0862">Zinc</keyword>
<keyword id="KW-0863">Zinc-finger</keyword>
<reference evidence="9" key="1">
    <citation type="journal article" date="2002" name="Nature">
        <title>The genome sequence of Schizosaccharomyces pombe.</title>
        <authorList>
            <person name="Wood V."/>
            <person name="Gwilliam R."/>
            <person name="Rajandream M.A."/>
            <person name="Lyne M.H."/>
            <person name="Lyne R."/>
            <person name="Stewart A."/>
            <person name="Sgouros J.G."/>
            <person name="Peat N."/>
            <person name="Hayles J."/>
            <person name="Baker S.G."/>
            <person name="Basham D."/>
            <person name="Bowman S."/>
            <person name="Brooks K."/>
            <person name="Brown D."/>
            <person name="Brown S."/>
            <person name="Chillingworth T."/>
            <person name="Churcher C.M."/>
            <person name="Collins M."/>
            <person name="Connor R."/>
            <person name="Cronin A."/>
            <person name="Davis P."/>
            <person name="Feltwell T."/>
            <person name="Fraser A."/>
            <person name="Gentles S."/>
            <person name="Goble A."/>
            <person name="Hamlin N."/>
            <person name="Harris D.E."/>
            <person name="Hidalgo J."/>
            <person name="Hodgson G."/>
            <person name="Holroyd S."/>
            <person name="Hornsby T."/>
            <person name="Howarth S."/>
            <person name="Huckle E.J."/>
            <person name="Hunt S."/>
            <person name="Jagels K."/>
            <person name="James K.D."/>
            <person name="Jones L."/>
            <person name="Jones M."/>
            <person name="Leather S."/>
            <person name="McDonald S."/>
            <person name="McLean J."/>
            <person name="Mooney P."/>
            <person name="Moule S."/>
            <person name="Mungall K.L."/>
            <person name="Murphy L.D."/>
            <person name="Niblett D."/>
            <person name="Odell C."/>
            <person name="Oliver K."/>
            <person name="O'Neil S."/>
            <person name="Pearson D."/>
            <person name="Quail M.A."/>
            <person name="Rabbinowitsch E."/>
            <person name="Rutherford K.M."/>
            <person name="Rutter S."/>
            <person name="Saunders D."/>
            <person name="Seeger K."/>
            <person name="Sharp S."/>
            <person name="Skelton J."/>
            <person name="Simmonds M.N."/>
            <person name="Squares R."/>
            <person name="Squares S."/>
            <person name="Stevens K."/>
            <person name="Taylor K."/>
            <person name="Taylor R.G."/>
            <person name="Tivey A."/>
            <person name="Walsh S.V."/>
            <person name="Warren T."/>
            <person name="Whitehead S."/>
            <person name="Woodward J.R."/>
            <person name="Volckaert G."/>
            <person name="Aert R."/>
            <person name="Robben J."/>
            <person name="Grymonprez B."/>
            <person name="Weltjens I."/>
            <person name="Vanstreels E."/>
            <person name="Rieger M."/>
            <person name="Schaefer M."/>
            <person name="Mueller-Auer S."/>
            <person name="Gabel C."/>
            <person name="Fuchs M."/>
            <person name="Duesterhoeft A."/>
            <person name="Fritzc C."/>
            <person name="Holzer E."/>
            <person name="Moestl D."/>
            <person name="Hilbert H."/>
            <person name="Borzym K."/>
            <person name="Langer I."/>
            <person name="Beck A."/>
            <person name="Lehrach H."/>
            <person name="Reinhardt R."/>
            <person name="Pohl T.M."/>
            <person name="Eger P."/>
            <person name="Zimmermann W."/>
            <person name="Wedler H."/>
            <person name="Wambutt R."/>
            <person name="Purnelle B."/>
            <person name="Goffeau A."/>
            <person name="Cadieu E."/>
            <person name="Dreano S."/>
            <person name="Gloux S."/>
            <person name="Lelaure V."/>
            <person name="Mottier S."/>
            <person name="Galibert F."/>
            <person name="Aves S.J."/>
            <person name="Xiang Z."/>
            <person name="Hunt C."/>
            <person name="Moore K."/>
            <person name="Hurst S.M."/>
            <person name="Lucas M."/>
            <person name="Rochet M."/>
            <person name="Gaillardin C."/>
            <person name="Tallada V.A."/>
            <person name="Garzon A."/>
            <person name="Thode G."/>
            <person name="Daga R.R."/>
            <person name="Cruzado L."/>
            <person name="Jimenez J."/>
            <person name="Sanchez M."/>
            <person name="del Rey F."/>
            <person name="Benito J."/>
            <person name="Dominguez A."/>
            <person name="Revuelta J.L."/>
            <person name="Moreno S."/>
            <person name="Armstrong J."/>
            <person name="Forsburg S.L."/>
            <person name="Cerutti L."/>
            <person name="Lowe T."/>
            <person name="McCombie W.R."/>
            <person name="Paulsen I."/>
            <person name="Potashkin J."/>
            <person name="Shpakovski G.V."/>
            <person name="Ussery D."/>
            <person name="Barrell B.G."/>
            <person name="Nurse P."/>
        </authorList>
    </citation>
    <scope>NUCLEOTIDE SEQUENCE [LARGE SCALE GENOMIC DNA]</scope>
    <source>
        <strain>972 / ATCC 24843</strain>
    </source>
</reference>
<reference evidence="8" key="2">
    <citation type="journal article" date="2004" name="Mol. Biol. Cell">
        <title>Slx1-Slx4 are subunits of a structure-specific endonuclease that maintains ribosomal DNA in fission yeast.</title>
        <authorList>
            <person name="Coulon S."/>
            <person name="Gaillard P.-H.L."/>
            <person name="Chahwan C."/>
            <person name="McDonald W.H."/>
            <person name="Yates J.R. III"/>
            <person name="Russell P."/>
        </authorList>
    </citation>
    <scope>FUNCTION</scope>
    <scope>ENZYMATIC ACTIVITY</scope>
    <scope>COFACTOR</scope>
    <scope>INTERACTION WITH SLX4</scope>
    <scope>SUBCELLULAR LOCATION</scope>
    <scope>DISRUPTION PHENOTYPE</scope>
    <scope>MUTAGENESIS OF ARG-34 AND GLU-74</scope>
</reference>
<reference evidence="8" key="3">
    <citation type="journal article" date="2005" name="Genetics">
        <title>Brc1-mediated DNA repair and damage tolerance.</title>
        <authorList>
            <person name="Sheedy D.M."/>
            <person name="Dimitrova D."/>
            <person name="Rankin J.K."/>
            <person name="Bass K.L."/>
            <person name="Lee K.M."/>
            <person name="Tapia-Alveal C."/>
            <person name="Harvey S.H."/>
            <person name="Murray J.M."/>
            <person name="O'Connell M.J."/>
        </authorList>
    </citation>
    <scope>FUNCTION</scope>
</reference>
<reference evidence="8" key="4">
    <citation type="journal article" date="2006" name="Mol. Biol. Cell">
        <title>Rad22Rad52-dependent repair of ribosomal DNA repeats cleaved by Slx1-Slx4 endonuclease.</title>
        <authorList>
            <person name="Coulon S."/>
            <person name="Noguchi E."/>
            <person name="Noguchi C."/>
            <person name="Du L.-L."/>
            <person name="Nakamura T.M."/>
            <person name="Russell P."/>
        </authorList>
    </citation>
    <scope>FUNCTION</scope>
    <scope>INTERACTION WITH SLX4</scope>
    <scope>SUBCELLULAR LOCATION</scope>
    <scope>MUTAGENESIS OF ARG-34</scope>
</reference>
<reference evidence="8" key="5">
    <citation type="journal article" date="2007" name="Genetics">
        <title>Brc1-mediated rescue of Smc5/6 deficiency: requirement for multiple nucleases and a novel Rad18 function.</title>
        <authorList>
            <person name="Lee K.M."/>
            <person name="Nizza S."/>
            <person name="Hayes T."/>
            <person name="Bass K.L."/>
            <person name="Irmisch A."/>
            <person name="Murray J.M."/>
            <person name="O'Connell M.J."/>
        </authorList>
    </citation>
    <scope>FUNCTION</scope>
</reference>
<reference key="6">
    <citation type="journal article" date="2009" name="Cell">
        <title>Human SLX4 is a Holliday junction resolvase subunit that binds multiple DNA repair/recombination endonucleases.</title>
        <authorList>
            <person name="Fekairi S."/>
            <person name="Scaglione S."/>
            <person name="Chahwan C."/>
            <person name="Taylor E.R."/>
            <person name="Tissier A."/>
            <person name="Coulon S."/>
            <person name="Dong M.-Q."/>
            <person name="Ruse C."/>
            <person name="Yates J.R. III"/>
            <person name="Russell P."/>
            <person name="Fuchs R.P."/>
            <person name="McGowan C.H."/>
            <person name="Gaillard P.-H.L."/>
        </authorList>
    </citation>
    <scope>FUNCTION</scope>
    <scope>COFACTOR</scope>
</reference>
<proteinExistence type="evidence at protein level"/>
<comment type="function">
    <text evidence="1 2 3 4 5 6">Catalytic subunit of the slx1-slx4 structure-specific endonuclease that resolves DNA secondary structures generated during DNA repair and recombination. Has endonuclease activity towards branched DNA substrates, introducing single-strand cuts in duplex DNA close to junctions with ss-DNA. Has a preference for stem-loop (SL) and splayed arm Y structures. Introduces a single-strand cut in duplex DNA on the 3' side of a double-strand/single-strand junction with respect to the single-strand moving 3' to 5' away from the junction. Plays a critical role in maintaining the integrity of the ribosomal DNA (rDNA) loci, where it has a role in re-starting stalled replication forks. The complex initiates homologous recombination (HR) events, used to maintain rDNA copy number, in the rDNA repeats that are processed by a mechanism that requires rad22, but not rhp51. It is also required for suppression of methyl methanesulfonate (MMS) and UV-C irradiation hypersensitivity of the structural maintenance of chromosome (SMC) protein mutant, smc6-74, by overexpression of brc1. Has Holliday junction resolvase activity in vitro.</text>
</comment>
<comment type="cofactor">
    <cofactor evidence="1 2 6">
        <name>Mg(2+)</name>
        <dbReference type="ChEBI" id="CHEBI:18420"/>
    </cofactor>
    <cofactor evidence="1 2 6">
        <name>Mn(2+)</name>
        <dbReference type="ChEBI" id="CHEBI:29035"/>
    </cofactor>
    <text evidence="1 2 6">Divalent cation. Mg(2+) is preferred. Has Holliday junction resolvase activity solely in the presence of Mn(2+).</text>
</comment>
<comment type="subunit">
    <text evidence="1">Forms a heterodimer with slx4.</text>
</comment>
<comment type="subcellular location">
    <subcellularLocation>
        <location evidence="2 4">Nucleus</location>
        <location evidence="2 4">Nucleolus</location>
    </subcellularLocation>
    <text evidence="2 4">Associates with chromatin at rDNA repeat protrusions.</text>
</comment>
<comment type="disruption phenotype">
    <text evidence="2">Deletion mutant provokes rDNA contraction. Simultaneous elimination of slx1 and rqh1 is lethal.</text>
</comment>
<comment type="similarity">
    <text evidence="1">Belongs to the SLX1 family.</text>
</comment>